<keyword id="KW-0025">Alternative splicing</keyword>
<keyword id="KW-0176">Collagen</keyword>
<keyword id="KW-1015">Disulfide bond</keyword>
<keyword id="KW-0272">Extracellular matrix</keyword>
<keyword id="KW-0325">Glycoprotein</keyword>
<keyword id="KW-0379">Hydroxylation</keyword>
<keyword id="KW-1185">Reference proteome</keyword>
<keyword id="KW-0677">Repeat</keyword>
<keyword id="KW-0964">Secreted</keyword>
<keyword id="KW-0732">Signal</keyword>
<reference key="1">
    <citation type="journal article" date="2002" name="J. Biol. Chem.">
        <title>Type XXVI collagen, a new member of the collagen family, is specifically expressed in the testis and ovary.</title>
        <authorList>
            <person name="Sato K."/>
            <person name="Yomogida K."/>
            <person name="Wada T."/>
            <person name="Yorihuzi T."/>
            <person name="Nishimune Y."/>
            <person name="Hosokawa N."/>
            <person name="Nagata K."/>
        </authorList>
    </citation>
    <scope>NUCLEOTIDE SEQUENCE [MRNA] (ISOFORM 2)</scope>
    <scope>CHARACTERIZATION</scope>
    <scope>TISSUE SPECIFICITY</scope>
    <source>
        <tissue>Testis</tissue>
    </source>
</reference>
<reference key="2">
    <citation type="journal article" date="2002" name="Dev. Biol.">
        <title>Developmental expression and biochemical characterization of Emu family members.</title>
        <authorList>
            <person name="Leimeister C."/>
            <person name="Steidl C."/>
            <person name="Schumacher N."/>
            <person name="Erhard S."/>
            <person name="Gessler M."/>
        </authorList>
    </citation>
    <scope>NUCLEOTIDE SEQUENCE [MRNA] (ISOFORMS 1 AND 2)</scope>
</reference>
<reference key="3">
    <citation type="journal article" date="2004" name="Genome Res.">
        <title>The status, quality, and expansion of the NIH full-length cDNA project: the Mammalian Gene Collection (MGC).</title>
        <authorList>
            <consortium name="The MGC Project Team"/>
        </authorList>
    </citation>
    <scope>NUCLEOTIDE SEQUENCE [LARGE SCALE MRNA] (ISOFORM 1)</scope>
    <source>
        <tissue>Olfactory epithelium</tissue>
    </source>
</reference>
<sequence length="440" mass="45810">MKLVLLLPWACCCLCGSALATGFLYPFPAAALQQHGYPEQGAGSPGNGYSSRRHWCHHTVTRTVSCQVQNGSETVVQRVYQSCRWPGPCANLVSYRTLIRPTYRVSYRTVTALEWRCCPGFTGSNCEEECMNCTRLSDMSERLTTLEAKVLLLEAAEQPSGPDNDLPPPQSTPPTWNEDFLPDAIPIAHPGPRRRRPTGPAGPPGQMGPPGPAGPPGSKGEQGQTGEKGPVGPPGLLGPPGPRGLPGEMGRPGPPGPPGPAGSPGLLPNTPQGVLYSLQTPTDKENGDSQLNPAVVDTVLTGIPGPRGPPGPPGPPGPHGPPGPPGAPGSQGLVDERVVARPSGEPSVKEEEDKASAAEGEGVQQLREALKILAERVLILEHMIGVHDPLASPEGGSGQDAALRANLKMKRGGPRPDGILAALLGPDPAQKSADQAGDRK</sequence>
<dbReference type="EMBL" id="AB085837">
    <property type="protein sequence ID" value="BAB96760.1"/>
    <property type="molecule type" value="mRNA"/>
</dbReference>
<dbReference type="EMBL" id="AJ416092">
    <property type="protein sequence ID" value="CAC94779.1"/>
    <property type="molecule type" value="mRNA"/>
</dbReference>
<dbReference type="EMBL" id="BC075713">
    <property type="protein sequence ID" value="AAH75713.1"/>
    <property type="molecule type" value="mRNA"/>
</dbReference>
<dbReference type="CCDS" id="CCDS19755.1">
    <molecule id="Q91VF6-1"/>
</dbReference>
<dbReference type="CCDS" id="CCDS84976.1">
    <molecule id="Q91VF6-2"/>
</dbReference>
<dbReference type="RefSeq" id="NP_001333628.1">
    <molecule id="Q91VF6-2"/>
    <property type="nucleotide sequence ID" value="NM_001346699.1"/>
</dbReference>
<dbReference type="RefSeq" id="NP_077794.2">
    <molecule id="Q91VF6-1"/>
    <property type="nucleotide sequence ID" value="NM_024474.2"/>
</dbReference>
<dbReference type="BioGRID" id="228305">
    <property type="interactions" value="3"/>
</dbReference>
<dbReference type="ComplexPortal" id="CPX-3007">
    <property type="entry name" value="Collagen type XXVI trimer"/>
</dbReference>
<dbReference type="FunCoup" id="Q91VF6">
    <property type="interactions" value="326"/>
</dbReference>
<dbReference type="STRING" id="10090.ENSMUSP00000052095"/>
<dbReference type="GlyCosmos" id="Q91VF6">
    <property type="glycosylation" value="2 sites, No reported glycans"/>
</dbReference>
<dbReference type="GlyGen" id="Q91VF6">
    <property type="glycosylation" value="3 sites, 1 N-linked glycan (1 site)"/>
</dbReference>
<dbReference type="iPTMnet" id="Q91VF6"/>
<dbReference type="PhosphoSitePlus" id="Q91VF6"/>
<dbReference type="PaxDb" id="10090-ENSMUSP00000052095"/>
<dbReference type="ProteomicsDB" id="277992">
    <molecule id="Q91VF6-1"/>
</dbReference>
<dbReference type="ProteomicsDB" id="277993">
    <molecule id="Q91VF6-2"/>
</dbReference>
<dbReference type="Antibodypedia" id="9137">
    <property type="antibodies" value="160 antibodies from 24 providers"/>
</dbReference>
<dbReference type="Ensembl" id="ENSMUST00000057497.13">
    <molecule id="Q91VF6-1"/>
    <property type="protein sequence ID" value="ENSMUSP00000052095.7"/>
    <property type="gene ID" value="ENSMUSG00000004415.16"/>
</dbReference>
<dbReference type="Ensembl" id="ENSMUST00000111103.2">
    <molecule id="Q91VF6-2"/>
    <property type="protein sequence ID" value="ENSMUSP00000106732.2"/>
    <property type="gene ID" value="ENSMUSG00000004415.16"/>
</dbReference>
<dbReference type="GeneID" id="140709"/>
<dbReference type="KEGG" id="mmu:140709"/>
<dbReference type="UCSC" id="uc009aay.1">
    <molecule id="Q91VF6-1"/>
    <property type="organism name" value="mouse"/>
</dbReference>
<dbReference type="UCSC" id="uc009aaz.1">
    <molecule id="Q91VF6-2"/>
    <property type="organism name" value="mouse"/>
</dbReference>
<dbReference type="AGR" id="MGI:2155345"/>
<dbReference type="CTD" id="136227"/>
<dbReference type="MGI" id="MGI:2155345">
    <property type="gene designation" value="Col26a1"/>
</dbReference>
<dbReference type="VEuPathDB" id="HostDB:ENSMUSG00000004415"/>
<dbReference type="eggNOG" id="ENOG502R2C0">
    <property type="taxonomic scope" value="Eukaryota"/>
</dbReference>
<dbReference type="GeneTree" id="ENSGT00940000161716"/>
<dbReference type="HOGENOM" id="CLU_045268_1_0_1"/>
<dbReference type="InParanoid" id="Q91VF6"/>
<dbReference type="OMA" id="SCCLWGC"/>
<dbReference type="OrthoDB" id="10071545at2759"/>
<dbReference type="PhylomeDB" id="Q91VF6"/>
<dbReference type="TreeFam" id="TF336589"/>
<dbReference type="Reactome" id="R-MMU-1442490">
    <property type="pathway name" value="Collagen degradation"/>
</dbReference>
<dbReference type="Reactome" id="R-MMU-1650814">
    <property type="pathway name" value="Collagen biosynthesis and modifying enzymes"/>
</dbReference>
<dbReference type="Reactome" id="R-MMU-8948216">
    <property type="pathway name" value="Collagen chain trimerization"/>
</dbReference>
<dbReference type="BioGRID-ORCS" id="140709">
    <property type="hits" value="0 hits in 81 CRISPR screens"/>
</dbReference>
<dbReference type="ChiTaRS" id="Col26a1">
    <property type="organism name" value="mouse"/>
</dbReference>
<dbReference type="PRO" id="PR:Q91VF6"/>
<dbReference type="Proteomes" id="UP000000589">
    <property type="component" value="Chromosome 5"/>
</dbReference>
<dbReference type="RNAct" id="Q91VF6">
    <property type="molecule type" value="protein"/>
</dbReference>
<dbReference type="Bgee" id="ENSMUSG00000004415">
    <property type="expression patterns" value="Expressed in secondary palatal shelf and 142 other cell types or tissues"/>
</dbReference>
<dbReference type="GO" id="GO:0005581">
    <property type="term" value="C:collagen trimer"/>
    <property type="evidence" value="ECO:0007669"/>
    <property type="project" value="UniProtKB-KW"/>
</dbReference>
<dbReference type="GO" id="GO:0005783">
    <property type="term" value="C:endoplasmic reticulum"/>
    <property type="evidence" value="ECO:0000314"/>
    <property type="project" value="MGI"/>
</dbReference>
<dbReference type="GO" id="GO:0031012">
    <property type="term" value="C:extracellular matrix"/>
    <property type="evidence" value="ECO:0000314"/>
    <property type="project" value="MGI"/>
</dbReference>
<dbReference type="GO" id="GO:0005576">
    <property type="term" value="C:extracellular region"/>
    <property type="evidence" value="ECO:0007669"/>
    <property type="project" value="UniProtKB-KW"/>
</dbReference>
<dbReference type="GO" id="GO:0005794">
    <property type="term" value="C:Golgi apparatus"/>
    <property type="evidence" value="ECO:0000314"/>
    <property type="project" value="MGI"/>
</dbReference>
<dbReference type="GO" id="GO:0010811">
    <property type="term" value="P:positive regulation of cell-substrate adhesion"/>
    <property type="evidence" value="ECO:0000314"/>
    <property type="project" value="MGI"/>
</dbReference>
<dbReference type="Gene3D" id="1.20.5.320">
    <property type="entry name" value="6-Phosphogluconate Dehydrogenase, domain 3"/>
    <property type="match status" value="1"/>
</dbReference>
<dbReference type="InterPro" id="IPR008160">
    <property type="entry name" value="Collagen"/>
</dbReference>
<dbReference type="InterPro" id="IPR050392">
    <property type="entry name" value="Collagen/C1q_domain"/>
</dbReference>
<dbReference type="InterPro" id="IPR011489">
    <property type="entry name" value="EMI_domain"/>
</dbReference>
<dbReference type="PANTHER" id="PTHR15427:SF19">
    <property type="entry name" value="COLLAGEN ALPHA-1(XXVI) CHAIN"/>
    <property type="match status" value="1"/>
</dbReference>
<dbReference type="PANTHER" id="PTHR15427">
    <property type="entry name" value="EMILIN ELASTIN MICROFIBRIL INTERFACE-LOCATED PROTEIN ELASTIN MICROFIBRIL INTERFACER"/>
    <property type="match status" value="1"/>
</dbReference>
<dbReference type="Pfam" id="PF01391">
    <property type="entry name" value="Collagen"/>
    <property type="match status" value="2"/>
</dbReference>
<dbReference type="Pfam" id="PF07546">
    <property type="entry name" value="EMI"/>
    <property type="match status" value="1"/>
</dbReference>
<dbReference type="PROSITE" id="PS51041">
    <property type="entry name" value="EMI"/>
    <property type="match status" value="1"/>
</dbReference>
<gene>
    <name type="primary">Col26a1</name>
    <name type="synonym">Col26a</name>
    <name type="synonym">Emid2</name>
    <name type="synonym">Emu2</name>
</gene>
<protein>
    <recommendedName>
        <fullName>Collagen alpha-1(XXVI) chain</fullName>
    </recommendedName>
    <alternativeName>
        <fullName>Alpha-1 type XXVI collagen</fullName>
    </alternativeName>
    <alternativeName>
        <fullName>EMI domain-containing protein 2</fullName>
    </alternativeName>
    <alternativeName>
        <fullName>Emilin and multimerin domain-containing protein 2</fullName>
        <shortName>Emu2</shortName>
    </alternativeName>
</protein>
<name>COQA1_MOUSE</name>
<feature type="signal peptide" evidence="1">
    <location>
        <begin position="1"/>
        <end position="20"/>
    </location>
</feature>
<feature type="chain" id="PRO_0000007826" description="Collagen alpha-1(XXVI) chain">
    <location>
        <begin position="21"/>
        <end position="440"/>
    </location>
</feature>
<feature type="domain" description="EMI" evidence="2">
    <location>
        <begin position="52"/>
        <end position="128"/>
    </location>
</feature>
<feature type="domain" description="Collagen-like 1">
    <location>
        <begin position="199"/>
        <end position="267"/>
    </location>
</feature>
<feature type="domain" description="Collagen-like 2">
    <location>
        <begin position="302"/>
        <end position="334"/>
    </location>
</feature>
<feature type="region of interest" description="Disordered" evidence="3">
    <location>
        <begin position="157"/>
        <end position="362"/>
    </location>
</feature>
<feature type="region of interest" description="Disordered" evidence="3">
    <location>
        <begin position="390"/>
        <end position="440"/>
    </location>
</feature>
<feature type="compositionally biased region" description="Pro residues" evidence="3">
    <location>
        <begin position="200"/>
        <end position="215"/>
    </location>
</feature>
<feature type="compositionally biased region" description="Pro residues" evidence="3">
    <location>
        <begin position="231"/>
        <end position="243"/>
    </location>
</feature>
<feature type="compositionally biased region" description="Pro residues" evidence="3">
    <location>
        <begin position="252"/>
        <end position="261"/>
    </location>
</feature>
<feature type="compositionally biased region" description="Polar residues" evidence="3">
    <location>
        <begin position="269"/>
        <end position="281"/>
    </location>
</feature>
<feature type="compositionally biased region" description="Pro residues" evidence="3">
    <location>
        <begin position="306"/>
        <end position="327"/>
    </location>
</feature>
<feature type="compositionally biased region" description="Basic and acidic residues" evidence="3">
    <location>
        <begin position="347"/>
        <end position="356"/>
    </location>
</feature>
<feature type="glycosylation site" description="N-linked (GlcNAc...) asparagine" evidence="1">
    <location>
        <position position="70"/>
    </location>
</feature>
<feature type="glycosylation site" description="N-linked (GlcNAc...) asparagine" evidence="1">
    <location>
        <position position="132"/>
    </location>
</feature>
<feature type="disulfide bond" evidence="2">
    <location>
        <begin position="56"/>
        <end position="118"/>
    </location>
</feature>
<feature type="disulfide bond" evidence="2">
    <location>
        <begin position="83"/>
        <end position="89"/>
    </location>
</feature>
<feature type="disulfide bond" evidence="2">
    <location>
        <begin position="117"/>
        <end position="126"/>
    </location>
</feature>
<feature type="splice variant" id="VSP_008448" description="In isoform 2." evidence="5 6">
    <location>
        <begin position="94"/>
        <end position="95"/>
    </location>
</feature>
<proteinExistence type="evidence at protein level"/>
<comment type="subunit">
    <text>Homotrimer or heterotrimer.</text>
</comment>
<comment type="subcellular location">
    <subcellularLocation>
        <location>Secreted</location>
        <location>Extracellular space</location>
        <location>Extracellular matrix</location>
    </subcellularLocation>
</comment>
<comment type="alternative products">
    <event type="alternative splicing"/>
    <isoform>
        <id>Q91VF6-1</id>
        <name>1</name>
        <sequence type="displayed"/>
    </isoform>
    <isoform>
        <id>Q91VF6-2</id>
        <name>2</name>
        <sequence type="described" ref="VSP_008448"/>
    </isoform>
</comment>
<comment type="tissue specificity">
    <text evidence="4">Specifically expressed in the testis and ovary in adult tissues.</text>
</comment>
<comment type="developmental stage">
    <text>At 9.5 dpc it is expressed in the somites and in mesenchymal cells of the head and the branchial arches. At 14.5 dpc it is expressed in the surrounding mesenchyme of the kidney and the inner ear. Expression is also observed in the spinal nerves and ganglia, the mesenchyme of the skull, the diaphragm, and the skeletal muscles.</text>
</comment>
<comment type="PTM">
    <text>Hydroxylated on proline residues.</text>
</comment>
<comment type="PTM">
    <text>N-glycosylated.</text>
</comment>
<comment type="miscellaneous">
    <molecule>Isoform 2</molecule>
    <text evidence="7">May be due to a competing acceptor splice site.</text>
</comment>
<evidence type="ECO:0000255" key="1"/>
<evidence type="ECO:0000255" key="2">
    <source>
        <dbReference type="PROSITE-ProRule" id="PRU00384"/>
    </source>
</evidence>
<evidence type="ECO:0000256" key="3">
    <source>
        <dbReference type="SAM" id="MobiDB-lite"/>
    </source>
</evidence>
<evidence type="ECO:0000269" key="4">
    <source>
    </source>
</evidence>
<evidence type="ECO:0000303" key="5">
    <source>
    </source>
</evidence>
<evidence type="ECO:0000303" key="6">
    <source>
    </source>
</evidence>
<evidence type="ECO:0000305" key="7"/>
<accession>Q91VF6</accession>
<accession>Q8K4P3</accession>
<organism>
    <name type="scientific">Mus musculus</name>
    <name type="common">Mouse</name>
    <dbReference type="NCBI Taxonomy" id="10090"/>
    <lineage>
        <taxon>Eukaryota</taxon>
        <taxon>Metazoa</taxon>
        <taxon>Chordata</taxon>
        <taxon>Craniata</taxon>
        <taxon>Vertebrata</taxon>
        <taxon>Euteleostomi</taxon>
        <taxon>Mammalia</taxon>
        <taxon>Eutheria</taxon>
        <taxon>Euarchontoglires</taxon>
        <taxon>Glires</taxon>
        <taxon>Rodentia</taxon>
        <taxon>Myomorpha</taxon>
        <taxon>Muroidea</taxon>
        <taxon>Muridae</taxon>
        <taxon>Murinae</taxon>
        <taxon>Mus</taxon>
        <taxon>Mus</taxon>
    </lineage>
</organism>